<reference key="1">
    <citation type="journal article" date="2007" name="Proc. Natl. Acad. Sci. U.S.A.">
        <title>Genome and proteome of long-chain alkane degrading Geobacillus thermodenitrificans NG80-2 isolated from a deep-subsurface oil reservoir.</title>
        <authorList>
            <person name="Feng L."/>
            <person name="Wang W."/>
            <person name="Cheng J."/>
            <person name="Ren Y."/>
            <person name="Zhao G."/>
            <person name="Gao C."/>
            <person name="Tang Y."/>
            <person name="Liu X."/>
            <person name="Han W."/>
            <person name="Peng X."/>
            <person name="Liu R."/>
            <person name="Wang L."/>
        </authorList>
    </citation>
    <scope>NUCLEOTIDE SEQUENCE [LARGE SCALE GENOMIC DNA]</scope>
    <source>
        <strain>NG80-2</strain>
    </source>
</reference>
<dbReference type="EMBL" id="CP000557">
    <property type="protein sequence ID" value="ABO68006.1"/>
    <property type="molecule type" value="Genomic_DNA"/>
</dbReference>
<dbReference type="RefSeq" id="WP_011887957.1">
    <property type="nucleotide sequence ID" value="NC_009328.1"/>
</dbReference>
<dbReference type="KEGG" id="gtn:GTNG_2661"/>
<dbReference type="eggNOG" id="COG2707">
    <property type="taxonomic scope" value="Bacteria"/>
</dbReference>
<dbReference type="HOGENOM" id="CLU_125889_1_0_9"/>
<dbReference type="Proteomes" id="UP000001578">
    <property type="component" value="Chromosome"/>
</dbReference>
<dbReference type="GO" id="GO:0005886">
    <property type="term" value="C:plasma membrane"/>
    <property type="evidence" value="ECO:0007669"/>
    <property type="project" value="UniProtKB-SubCell"/>
</dbReference>
<dbReference type="HAMAP" id="MF_01874">
    <property type="entry name" value="UPF0756"/>
    <property type="match status" value="1"/>
</dbReference>
<dbReference type="InterPro" id="IPR007382">
    <property type="entry name" value="UPF0756_TM"/>
</dbReference>
<dbReference type="PANTHER" id="PTHR38452">
    <property type="entry name" value="UPF0756 MEMBRANE PROTEIN YEAL"/>
    <property type="match status" value="1"/>
</dbReference>
<dbReference type="PANTHER" id="PTHR38452:SF1">
    <property type="entry name" value="UPF0756 MEMBRANE PROTEIN YEAL"/>
    <property type="match status" value="1"/>
</dbReference>
<dbReference type="Pfam" id="PF04284">
    <property type="entry name" value="DUF441"/>
    <property type="match status" value="1"/>
</dbReference>
<proteinExistence type="inferred from homology"/>
<comment type="subcellular location">
    <subcellularLocation>
        <location evidence="1">Cell membrane</location>
        <topology evidence="1">Multi-pass membrane protein</topology>
    </subcellularLocation>
</comment>
<comment type="similarity">
    <text evidence="1">Belongs to the UPF0756 family.</text>
</comment>
<keyword id="KW-1003">Cell membrane</keyword>
<keyword id="KW-0472">Membrane</keyword>
<keyword id="KW-0812">Transmembrane</keyword>
<keyword id="KW-1133">Transmembrane helix</keyword>
<gene>
    <name type="ordered locus">GTNG_2661</name>
</gene>
<name>Y2661_GEOTN</name>
<evidence type="ECO:0000255" key="1">
    <source>
        <dbReference type="HAMAP-Rule" id="MF_01874"/>
    </source>
</evidence>
<organism>
    <name type="scientific">Geobacillus thermodenitrificans (strain NG80-2)</name>
    <dbReference type="NCBI Taxonomy" id="420246"/>
    <lineage>
        <taxon>Bacteria</taxon>
        <taxon>Bacillati</taxon>
        <taxon>Bacillota</taxon>
        <taxon>Bacilli</taxon>
        <taxon>Bacillales</taxon>
        <taxon>Anoxybacillaceae</taxon>
        <taxon>Geobacillus</taxon>
    </lineage>
</organism>
<accession>A4IRQ2</accession>
<feature type="chain" id="PRO_0000388879" description="UPF0756 membrane protein GTNG_2661">
    <location>
        <begin position="1"/>
        <end position="151"/>
    </location>
</feature>
<feature type="transmembrane region" description="Helical" evidence="1">
    <location>
        <begin position="5"/>
        <end position="25"/>
    </location>
</feature>
<feature type="transmembrane region" description="Helical" evidence="1">
    <location>
        <begin position="53"/>
        <end position="73"/>
    </location>
</feature>
<feature type="transmembrane region" description="Helical" evidence="1">
    <location>
        <begin position="86"/>
        <end position="106"/>
    </location>
</feature>
<feature type="transmembrane region" description="Helical" evidence="1">
    <location>
        <begin position="116"/>
        <end position="136"/>
    </location>
</feature>
<protein>
    <recommendedName>
        <fullName evidence="1">UPF0756 membrane protein GTNG_2661</fullName>
    </recommendedName>
</protein>
<sequence>MNEPVLFLLLLLAIGVIAKNQSLIIAIAVLLAIKLFGLEARLLPAIQAKGINWGVTVITVAVLAPIATGEIGFKQLIGSLQSASAWIALLFGIFVALIAKGGVMLLASDPHITASLVLGTVIAVSLFHGVAVGPLIGAGIAYVVIKMVEYF</sequence>